<evidence type="ECO:0000255" key="1">
    <source>
        <dbReference type="HAMAP-Rule" id="MF_00031"/>
    </source>
</evidence>
<accession>C6C065</accession>
<organism>
    <name type="scientific">Maridesulfovibrio salexigens (strain ATCC 14822 / DSM 2638 / NCIMB 8403 / VKM B-1763)</name>
    <name type="common">Desulfovibrio salexigens</name>
    <dbReference type="NCBI Taxonomy" id="526222"/>
    <lineage>
        <taxon>Bacteria</taxon>
        <taxon>Pseudomonadati</taxon>
        <taxon>Thermodesulfobacteriota</taxon>
        <taxon>Desulfovibrionia</taxon>
        <taxon>Desulfovibrionales</taxon>
        <taxon>Desulfovibrionaceae</taxon>
        <taxon>Maridesulfovibrio</taxon>
    </lineage>
</organism>
<proteinExistence type="inferred from homology"/>
<sequence>MIAYIHGKLLEATDKSCIILTPGGVGYELFLTLSAISTLPESGSDVTFYVHSVIREDAFDLYGFPCFDDREVFRTLISVDRLGPKKALAILSQFGPKDLQDLVFREDVKTLSIVPGIGPKSARQILWSLKDKMETLKSATVRSGACPVEGDRSEFLDALSGLRNLGYGDDEVRDFLKDIFDEEPDLDAGGAIRVALKKISQNK</sequence>
<dbReference type="EMBL" id="CP001649">
    <property type="protein sequence ID" value="ACS80936.1"/>
    <property type="molecule type" value="Genomic_DNA"/>
</dbReference>
<dbReference type="RefSeq" id="WP_015852752.1">
    <property type="nucleotide sequence ID" value="NC_012881.1"/>
</dbReference>
<dbReference type="SMR" id="C6C065"/>
<dbReference type="STRING" id="526222.Desal_2884"/>
<dbReference type="KEGG" id="dsa:Desal_2884"/>
<dbReference type="eggNOG" id="COG0632">
    <property type="taxonomic scope" value="Bacteria"/>
</dbReference>
<dbReference type="HOGENOM" id="CLU_087936_0_0_7"/>
<dbReference type="OrthoDB" id="5293449at2"/>
<dbReference type="Proteomes" id="UP000002601">
    <property type="component" value="Chromosome"/>
</dbReference>
<dbReference type="GO" id="GO:0005737">
    <property type="term" value="C:cytoplasm"/>
    <property type="evidence" value="ECO:0007669"/>
    <property type="project" value="UniProtKB-SubCell"/>
</dbReference>
<dbReference type="GO" id="GO:0009379">
    <property type="term" value="C:Holliday junction helicase complex"/>
    <property type="evidence" value="ECO:0007669"/>
    <property type="project" value="InterPro"/>
</dbReference>
<dbReference type="GO" id="GO:0048476">
    <property type="term" value="C:Holliday junction resolvase complex"/>
    <property type="evidence" value="ECO:0007669"/>
    <property type="project" value="UniProtKB-UniRule"/>
</dbReference>
<dbReference type="GO" id="GO:0005524">
    <property type="term" value="F:ATP binding"/>
    <property type="evidence" value="ECO:0007669"/>
    <property type="project" value="InterPro"/>
</dbReference>
<dbReference type="GO" id="GO:0000400">
    <property type="term" value="F:four-way junction DNA binding"/>
    <property type="evidence" value="ECO:0007669"/>
    <property type="project" value="UniProtKB-UniRule"/>
</dbReference>
<dbReference type="GO" id="GO:0009378">
    <property type="term" value="F:four-way junction helicase activity"/>
    <property type="evidence" value="ECO:0007669"/>
    <property type="project" value="InterPro"/>
</dbReference>
<dbReference type="GO" id="GO:0006310">
    <property type="term" value="P:DNA recombination"/>
    <property type="evidence" value="ECO:0007669"/>
    <property type="project" value="UniProtKB-UniRule"/>
</dbReference>
<dbReference type="GO" id="GO:0006281">
    <property type="term" value="P:DNA repair"/>
    <property type="evidence" value="ECO:0007669"/>
    <property type="project" value="UniProtKB-UniRule"/>
</dbReference>
<dbReference type="CDD" id="cd14332">
    <property type="entry name" value="UBA_RuvA_C"/>
    <property type="match status" value="1"/>
</dbReference>
<dbReference type="Gene3D" id="1.10.150.20">
    <property type="entry name" value="5' to 3' exonuclease, C-terminal subdomain"/>
    <property type="match status" value="1"/>
</dbReference>
<dbReference type="Gene3D" id="1.10.8.10">
    <property type="entry name" value="DNA helicase RuvA subunit, C-terminal domain"/>
    <property type="match status" value="1"/>
</dbReference>
<dbReference type="Gene3D" id="2.40.50.140">
    <property type="entry name" value="Nucleic acid-binding proteins"/>
    <property type="match status" value="1"/>
</dbReference>
<dbReference type="HAMAP" id="MF_00031">
    <property type="entry name" value="DNA_HJ_migration_RuvA"/>
    <property type="match status" value="1"/>
</dbReference>
<dbReference type="InterPro" id="IPR013849">
    <property type="entry name" value="DNA_helicase_Holl-junc_RuvA_I"/>
</dbReference>
<dbReference type="InterPro" id="IPR003583">
    <property type="entry name" value="Hlx-hairpin-Hlx_DNA-bd_motif"/>
</dbReference>
<dbReference type="InterPro" id="IPR012340">
    <property type="entry name" value="NA-bd_OB-fold"/>
</dbReference>
<dbReference type="InterPro" id="IPR000085">
    <property type="entry name" value="RuvA"/>
</dbReference>
<dbReference type="InterPro" id="IPR010994">
    <property type="entry name" value="RuvA_2-like"/>
</dbReference>
<dbReference type="InterPro" id="IPR011114">
    <property type="entry name" value="RuvA_C"/>
</dbReference>
<dbReference type="InterPro" id="IPR036267">
    <property type="entry name" value="RuvA_C_sf"/>
</dbReference>
<dbReference type="NCBIfam" id="TIGR00084">
    <property type="entry name" value="ruvA"/>
    <property type="match status" value="1"/>
</dbReference>
<dbReference type="Pfam" id="PF14520">
    <property type="entry name" value="HHH_5"/>
    <property type="match status" value="1"/>
</dbReference>
<dbReference type="Pfam" id="PF01330">
    <property type="entry name" value="RuvA_N"/>
    <property type="match status" value="1"/>
</dbReference>
<dbReference type="SMART" id="SM00278">
    <property type="entry name" value="HhH1"/>
    <property type="match status" value="2"/>
</dbReference>
<dbReference type="SUPFAM" id="SSF46929">
    <property type="entry name" value="DNA helicase RuvA subunit, C-terminal domain"/>
    <property type="match status" value="1"/>
</dbReference>
<dbReference type="SUPFAM" id="SSF50249">
    <property type="entry name" value="Nucleic acid-binding proteins"/>
    <property type="match status" value="1"/>
</dbReference>
<dbReference type="SUPFAM" id="SSF47781">
    <property type="entry name" value="RuvA domain 2-like"/>
    <property type="match status" value="1"/>
</dbReference>
<gene>
    <name evidence="1" type="primary">ruvA</name>
    <name type="ordered locus">Desal_2884</name>
</gene>
<name>RUVA_MARSD</name>
<reference key="1">
    <citation type="submission" date="2009-06" db="EMBL/GenBank/DDBJ databases">
        <title>Complete sequence of Desulfovibrio salexigens DSM 2638.</title>
        <authorList>
            <consortium name="US DOE Joint Genome Institute"/>
            <person name="Lucas S."/>
            <person name="Copeland A."/>
            <person name="Lapidus A."/>
            <person name="Glavina del Rio T."/>
            <person name="Tice H."/>
            <person name="Bruce D."/>
            <person name="Goodwin L."/>
            <person name="Pitluck S."/>
            <person name="Munk A.C."/>
            <person name="Brettin T."/>
            <person name="Detter J.C."/>
            <person name="Han C."/>
            <person name="Tapia R."/>
            <person name="Larimer F."/>
            <person name="Land M."/>
            <person name="Hauser L."/>
            <person name="Kyrpides N."/>
            <person name="Anderson I."/>
            <person name="Wall J.D."/>
            <person name="Arkin A.P."/>
            <person name="Dehal P."/>
            <person name="Chivian D."/>
            <person name="Giles B."/>
            <person name="Hazen T.C."/>
        </authorList>
    </citation>
    <scope>NUCLEOTIDE SEQUENCE [LARGE SCALE GENOMIC DNA]</scope>
    <source>
        <strain>ATCC 14822 / DSM 2638 / NCIMB 8403 / VKM B-1763</strain>
    </source>
</reference>
<feature type="chain" id="PRO_1000201985" description="Holliday junction branch migration complex subunit RuvA">
    <location>
        <begin position="1"/>
        <end position="203"/>
    </location>
</feature>
<feature type="region of interest" description="Domain I" evidence="1">
    <location>
        <begin position="1"/>
        <end position="65"/>
    </location>
</feature>
<feature type="region of interest" description="Domain II" evidence="1">
    <location>
        <begin position="66"/>
        <end position="144"/>
    </location>
</feature>
<feature type="region of interest" description="Flexible linker" evidence="1">
    <location>
        <begin position="145"/>
        <end position="155"/>
    </location>
</feature>
<feature type="region of interest" description="Domain III" evidence="1">
    <location>
        <begin position="155"/>
        <end position="203"/>
    </location>
</feature>
<keyword id="KW-0963">Cytoplasm</keyword>
<keyword id="KW-0227">DNA damage</keyword>
<keyword id="KW-0233">DNA recombination</keyword>
<keyword id="KW-0234">DNA repair</keyword>
<keyword id="KW-0238">DNA-binding</keyword>
<keyword id="KW-1185">Reference proteome</keyword>
<protein>
    <recommendedName>
        <fullName evidence="1">Holliday junction branch migration complex subunit RuvA</fullName>
    </recommendedName>
</protein>
<comment type="function">
    <text evidence="1">The RuvA-RuvB-RuvC complex processes Holliday junction (HJ) DNA during genetic recombination and DNA repair, while the RuvA-RuvB complex plays an important role in the rescue of blocked DNA replication forks via replication fork reversal (RFR). RuvA specifically binds to HJ cruciform DNA, conferring on it an open structure. The RuvB hexamer acts as an ATP-dependent pump, pulling dsDNA into and through the RuvAB complex. HJ branch migration allows RuvC to scan DNA until it finds its consensus sequence, where it cleaves and resolves the cruciform DNA.</text>
</comment>
<comment type="subunit">
    <text evidence="1">Homotetramer. Forms an RuvA(8)-RuvB(12)-Holliday junction (HJ) complex. HJ DNA is sandwiched between 2 RuvA tetramers; dsDNA enters through RuvA and exits via RuvB. An RuvB hexamer assembles on each DNA strand where it exits the tetramer. Each RuvB hexamer is contacted by two RuvA subunits (via domain III) on 2 adjacent RuvB subunits; this complex drives branch migration. In the full resolvosome a probable DNA-RuvA(4)-RuvB(12)-RuvC(2) complex forms which resolves the HJ.</text>
</comment>
<comment type="subcellular location">
    <subcellularLocation>
        <location evidence="1">Cytoplasm</location>
    </subcellularLocation>
</comment>
<comment type="domain">
    <text evidence="1">Has three domains with a flexible linker between the domains II and III and assumes an 'L' shape. Domain III is highly mobile and contacts RuvB.</text>
</comment>
<comment type="similarity">
    <text evidence="1">Belongs to the RuvA family.</text>
</comment>